<protein>
    <recommendedName>
        <fullName evidence="1">tRNA pseudouridine synthase A</fullName>
        <ecNumber evidence="1">5.4.99.12</ecNumber>
    </recommendedName>
    <alternativeName>
        <fullName evidence="1">tRNA pseudouridine(38-40) synthase</fullName>
    </alternativeName>
    <alternativeName>
        <fullName evidence="1">tRNA pseudouridylate synthase I</fullName>
    </alternativeName>
    <alternativeName>
        <fullName evidence="1">tRNA-uridine isomerase I</fullName>
    </alternativeName>
</protein>
<gene>
    <name evidence="1" type="primary">truA</name>
    <name type="ordered locus">A1E_05490</name>
</gene>
<reference key="1">
    <citation type="submission" date="2007-09" db="EMBL/GenBank/DDBJ databases">
        <title>Complete genome sequence of Rickettsia canadensis.</title>
        <authorList>
            <person name="Madan A."/>
            <person name="Fahey J."/>
            <person name="Helton E."/>
            <person name="Ketteman M."/>
            <person name="Madan A."/>
            <person name="Rodrigues S."/>
            <person name="Sanchez A."/>
            <person name="Whiting M."/>
            <person name="Dasch G."/>
            <person name="Eremeeva M."/>
        </authorList>
    </citation>
    <scope>NUCLEOTIDE SEQUENCE [LARGE SCALE GENOMIC DNA]</scope>
    <source>
        <strain>McKiel</strain>
    </source>
</reference>
<sequence>MYRYKITIEYLGTDLAGWQRQAGIMSVQQILEEAIYKFSGEQVVLFGSGRTDAGVHAIGQVAHFDLSKNLETHKIITAINYFARPYSVIVWNCEMAPNNFHARFSAVSRHYIYRILNRPYSSVINRDRVWWISSPLDVLAMQKAATYLLGKHDFTSFRASSCQSKSPIKTLTELNIIKEDEEIKLYLSAPSFLHHMVRNIVGSLVLVGKNVWQAEYIKELLEVKDRKAAGPTAPASGLYFVRTEY</sequence>
<accession>A8F079</accession>
<keyword id="KW-0413">Isomerase</keyword>
<keyword id="KW-0819">tRNA processing</keyword>
<evidence type="ECO:0000255" key="1">
    <source>
        <dbReference type="HAMAP-Rule" id="MF_00171"/>
    </source>
</evidence>
<dbReference type="EC" id="5.4.99.12" evidence="1"/>
<dbReference type="EMBL" id="CP000409">
    <property type="protein sequence ID" value="ABV74012.1"/>
    <property type="molecule type" value="Genomic_DNA"/>
</dbReference>
<dbReference type="RefSeq" id="WP_012149207.1">
    <property type="nucleotide sequence ID" value="NC_009879.1"/>
</dbReference>
<dbReference type="SMR" id="A8F079"/>
<dbReference type="STRING" id="293613.A1E_05490"/>
<dbReference type="KEGG" id="rcm:A1E_05490"/>
<dbReference type="eggNOG" id="COG0101">
    <property type="taxonomic scope" value="Bacteria"/>
</dbReference>
<dbReference type="HOGENOM" id="CLU_014673_0_1_5"/>
<dbReference type="Proteomes" id="UP000007056">
    <property type="component" value="Chromosome"/>
</dbReference>
<dbReference type="GO" id="GO:0003723">
    <property type="term" value="F:RNA binding"/>
    <property type="evidence" value="ECO:0007669"/>
    <property type="project" value="InterPro"/>
</dbReference>
<dbReference type="GO" id="GO:0160147">
    <property type="term" value="F:tRNA pseudouridine(38-40) synthase activity"/>
    <property type="evidence" value="ECO:0007669"/>
    <property type="project" value="UniProtKB-EC"/>
</dbReference>
<dbReference type="GO" id="GO:0031119">
    <property type="term" value="P:tRNA pseudouridine synthesis"/>
    <property type="evidence" value="ECO:0007669"/>
    <property type="project" value="UniProtKB-UniRule"/>
</dbReference>
<dbReference type="CDD" id="cd02570">
    <property type="entry name" value="PseudoU_synth_EcTruA"/>
    <property type="match status" value="1"/>
</dbReference>
<dbReference type="FunFam" id="3.30.70.580:FF:000001">
    <property type="entry name" value="tRNA pseudouridine synthase A"/>
    <property type="match status" value="1"/>
</dbReference>
<dbReference type="Gene3D" id="3.30.70.660">
    <property type="entry name" value="Pseudouridine synthase I, catalytic domain, C-terminal subdomain"/>
    <property type="match status" value="1"/>
</dbReference>
<dbReference type="Gene3D" id="3.30.70.580">
    <property type="entry name" value="Pseudouridine synthase I, catalytic domain, N-terminal subdomain"/>
    <property type="match status" value="1"/>
</dbReference>
<dbReference type="HAMAP" id="MF_00171">
    <property type="entry name" value="TruA"/>
    <property type="match status" value="1"/>
</dbReference>
<dbReference type="InterPro" id="IPR020103">
    <property type="entry name" value="PsdUridine_synth_cat_dom_sf"/>
</dbReference>
<dbReference type="InterPro" id="IPR001406">
    <property type="entry name" value="PsdUridine_synth_TruA"/>
</dbReference>
<dbReference type="InterPro" id="IPR020097">
    <property type="entry name" value="PsdUridine_synth_TruA_a/b_dom"/>
</dbReference>
<dbReference type="InterPro" id="IPR020095">
    <property type="entry name" value="PsdUridine_synth_TruA_C"/>
</dbReference>
<dbReference type="InterPro" id="IPR020094">
    <property type="entry name" value="TruA/RsuA/RluB/E/F_N"/>
</dbReference>
<dbReference type="NCBIfam" id="TIGR00071">
    <property type="entry name" value="hisT_truA"/>
    <property type="match status" value="1"/>
</dbReference>
<dbReference type="PANTHER" id="PTHR11142">
    <property type="entry name" value="PSEUDOURIDYLATE SYNTHASE"/>
    <property type="match status" value="1"/>
</dbReference>
<dbReference type="PANTHER" id="PTHR11142:SF0">
    <property type="entry name" value="TRNA PSEUDOURIDINE SYNTHASE-LIKE 1"/>
    <property type="match status" value="1"/>
</dbReference>
<dbReference type="Pfam" id="PF01416">
    <property type="entry name" value="PseudoU_synth_1"/>
    <property type="match status" value="2"/>
</dbReference>
<dbReference type="PIRSF" id="PIRSF001430">
    <property type="entry name" value="tRNA_psdUrid_synth"/>
    <property type="match status" value="1"/>
</dbReference>
<dbReference type="SUPFAM" id="SSF55120">
    <property type="entry name" value="Pseudouridine synthase"/>
    <property type="match status" value="1"/>
</dbReference>
<name>TRUA_RICCK</name>
<feature type="chain" id="PRO_1000017158" description="tRNA pseudouridine synthase A">
    <location>
        <begin position="1"/>
        <end position="245"/>
    </location>
</feature>
<feature type="active site" description="Nucleophile" evidence="1">
    <location>
        <position position="52"/>
    </location>
</feature>
<feature type="binding site" evidence="1">
    <location>
        <position position="111"/>
    </location>
    <ligand>
        <name>substrate</name>
    </ligand>
</feature>
<proteinExistence type="inferred from homology"/>
<comment type="function">
    <text evidence="1">Formation of pseudouridine at positions 38, 39 and 40 in the anticodon stem and loop of transfer RNAs.</text>
</comment>
<comment type="catalytic activity">
    <reaction evidence="1">
        <text>uridine(38/39/40) in tRNA = pseudouridine(38/39/40) in tRNA</text>
        <dbReference type="Rhea" id="RHEA:22376"/>
        <dbReference type="Rhea" id="RHEA-COMP:10085"/>
        <dbReference type="Rhea" id="RHEA-COMP:10087"/>
        <dbReference type="ChEBI" id="CHEBI:65314"/>
        <dbReference type="ChEBI" id="CHEBI:65315"/>
        <dbReference type="EC" id="5.4.99.12"/>
    </reaction>
</comment>
<comment type="subunit">
    <text evidence="1">Homodimer.</text>
</comment>
<comment type="similarity">
    <text evidence="1">Belongs to the tRNA pseudouridine synthase TruA family.</text>
</comment>
<organism>
    <name type="scientific">Rickettsia canadensis (strain McKiel)</name>
    <dbReference type="NCBI Taxonomy" id="293613"/>
    <lineage>
        <taxon>Bacteria</taxon>
        <taxon>Pseudomonadati</taxon>
        <taxon>Pseudomonadota</taxon>
        <taxon>Alphaproteobacteria</taxon>
        <taxon>Rickettsiales</taxon>
        <taxon>Rickettsiaceae</taxon>
        <taxon>Rickettsieae</taxon>
        <taxon>Rickettsia</taxon>
        <taxon>belli group</taxon>
    </lineage>
</organism>